<keyword id="KW-0028">Amino-acid biosynthesis</keyword>
<keyword id="KW-0378">Hydrolase</keyword>
<keyword id="KW-0486">Methionine biosynthesis</keyword>
<evidence type="ECO:0000255" key="1">
    <source>
        <dbReference type="HAMAP-Rule" id="MF_01684"/>
    </source>
</evidence>
<comment type="function">
    <text evidence="1">Catalyzes the irreversible cleavage of the glycosidic bond in both 5'-methylthioadenosine (MTA) and S-adenosylhomocysteine (SAH/AdoHcy) to adenine and the corresponding thioribose, 5'-methylthioribose and S-ribosylhomocysteine, respectively. Also cleaves 5'-deoxyadenosine, a toxic by-product of radical S-adenosylmethionine (SAM) enzymes, into 5-deoxyribose and adenine.</text>
</comment>
<comment type="catalytic activity">
    <reaction evidence="1">
        <text>S-adenosyl-L-homocysteine + H2O = S-(5-deoxy-D-ribos-5-yl)-L-homocysteine + adenine</text>
        <dbReference type="Rhea" id="RHEA:17805"/>
        <dbReference type="ChEBI" id="CHEBI:15377"/>
        <dbReference type="ChEBI" id="CHEBI:16708"/>
        <dbReference type="ChEBI" id="CHEBI:57856"/>
        <dbReference type="ChEBI" id="CHEBI:58195"/>
        <dbReference type="EC" id="3.2.2.9"/>
    </reaction>
</comment>
<comment type="catalytic activity">
    <reaction evidence="1">
        <text>S-methyl-5'-thioadenosine + H2O = 5-(methylsulfanyl)-D-ribose + adenine</text>
        <dbReference type="Rhea" id="RHEA:13617"/>
        <dbReference type="ChEBI" id="CHEBI:15377"/>
        <dbReference type="ChEBI" id="CHEBI:16708"/>
        <dbReference type="ChEBI" id="CHEBI:17509"/>
        <dbReference type="ChEBI" id="CHEBI:78440"/>
        <dbReference type="EC" id="3.2.2.9"/>
    </reaction>
</comment>
<comment type="catalytic activity">
    <reaction evidence="1">
        <text>5'-deoxyadenosine + H2O = 5-deoxy-D-ribose + adenine</text>
        <dbReference type="Rhea" id="RHEA:29859"/>
        <dbReference type="ChEBI" id="CHEBI:15377"/>
        <dbReference type="ChEBI" id="CHEBI:16708"/>
        <dbReference type="ChEBI" id="CHEBI:17319"/>
        <dbReference type="ChEBI" id="CHEBI:149540"/>
        <dbReference type="EC" id="3.2.2.9"/>
    </reaction>
    <physiologicalReaction direction="left-to-right" evidence="1">
        <dbReference type="Rhea" id="RHEA:29860"/>
    </physiologicalReaction>
</comment>
<comment type="pathway">
    <text evidence="1">Amino-acid biosynthesis; L-methionine biosynthesis via salvage pathway; S-methyl-5-thio-alpha-D-ribose 1-phosphate from S-methyl-5'-thioadenosine (hydrolase route): step 1/2.</text>
</comment>
<comment type="similarity">
    <text evidence="1">Belongs to the PNP/UDP phosphorylase family. MtnN subfamily.</text>
</comment>
<reference key="1">
    <citation type="journal article" date="2008" name="PLoS ONE">
        <title>Genome biology of Actinobacillus pleuropneumoniae JL03, an isolate of serotype 3 prevalent in China.</title>
        <authorList>
            <person name="Xu Z."/>
            <person name="Zhou Y."/>
            <person name="Li L."/>
            <person name="Zhou R."/>
            <person name="Xiao S."/>
            <person name="Wan Y."/>
            <person name="Zhang S."/>
            <person name="Wang K."/>
            <person name="Li W."/>
            <person name="Li L."/>
            <person name="Jin H."/>
            <person name="Kang M."/>
            <person name="Dalai B."/>
            <person name="Li T."/>
            <person name="Liu L."/>
            <person name="Cheng Y."/>
            <person name="Zhang L."/>
            <person name="Xu T."/>
            <person name="Zheng H."/>
            <person name="Pu S."/>
            <person name="Wang B."/>
            <person name="Gu W."/>
            <person name="Zhang X.L."/>
            <person name="Zhu G.-F."/>
            <person name="Wang S."/>
            <person name="Zhao G.-P."/>
            <person name="Chen H."/>
        </authorList>
    </citation>
    <scope>NUCLEOTIDE SEQUENCE [LARGE SCALE GENOMIC DNA]</scope>
    <source>
        <strain>JL03</strain>
    </source>
</reference>
<gene>
    <name evidence="1" type="primary">mtnN</name>
    <name type="ordered locus">APJL_1670</name>
</gene>
<proteinExistence type="inferred from homology"/>
<organism>
    <name type="scientific">Actinobacillus pleuropneumoniae serotype 3 (strain JL03)</name>
    <dbReference type="NCBI Taxonomy" id="434271"/>
    <lineage>
        <taxon>Bacteria</taxon>
        <taxon>Pseudomonadati</taxon>
        <taxon>Pseudomonadota</taxon>
        <taxon>Gammaproteobacteria</taxon>
        <taxon>Pasteurellales</taxon>
        <taxon>Pasteurellaceae</taxon>
        <taxon>Actinobacillus</taxon>
    </lineage>
</organism>
<feature type="chain" id="PRO_0000359265" description="5'-methylthioadenosine/S-adenosylhomocysteine nucleosidase">
    <location>
        <begin position="1"/>
        <end position="232"/>
    </location>
</feature>
<feature type="active site" description="Proton acceptor" evidence="1">
    <location>
        <position position="14"/>
    </location>
</feature>
<feature type="active site" description="Proton donor" evidence="1">
    <location>
        <position position="199"/>
    </location>
</feature>
<feature type="binding site" evidence="1">
    <location>
        <position position="80"/>
    </location>
    <ligand>
        <name>substrate</name>
    </ligand>
</feature>
<feature type="binding site" evidence="1">
    <location>
        <position position="154"/>
    </location>
    <ligand>
        <name>substrate</name>
    </ligand>
</feature>
<feature type="binding site" evidence="1">
    <location>
        <begin position="175"/>
        <end position="176"/>
    </location>
    <ligand>
        <name>substrate</name>
    </ligand>
</feature>
<accession>B0BRW3</accession>
<protein>
    <recommendedName>
        <fullName evidence="1">5'-methylthioadenosine/S-adenosylhomocysteine nucleosidase</fullName>
        <shortName evidence="1">MTA/SAH nucleosidase</shortName>
        <shortName evidence="1">MTAN</shortName>
        <ecNumber evidence="1">3.2.2.9</ecNumber>
    </recommendedName>
    <alternativeName>
        <fullName evidence="1">5'-deoxyadenosine nucleosidase</fullName>
        <shortName evidence="1">DOA nucleosidase</shortName>
        <shortName evidence="1">dAdo nucleosidase</shortName>
    </alternativeName>
    <alternativeName>
        <fullName evidence="1">5'-methylthioadenosine nucleosidase</fullName>
        <shortName evidence="1">MTA nucleosidase</shortName>
    </alternativeName>
    <alternativeName>
        <fullName evidence="1">S-adenosylhomocysteine nucleosidase</fullName>
        <shortName evidence="1">AdoHcy nucleosidase</shortName>
        <shortName evidence="1">SAH nucleosidase</shortName>
        <shortName evidence="1">SRH nucleosidase</shortName>
    </alternativeName>
</protein>
<dbReference type="EC" id="3.2.2.9" evidence="1"/>
<dbReference type="EMBL" id="CP000687">
    <property type="protein sequence ID" value="ABY70222.1"/>
    <property type="molecule type" value="Genomic_DNA"/>
</dbReference>
<dbReference type="RefSeq" id="WP_012263327.1">
    <property type="nucleotide sequence ID" value="NC_010278.1"/>
</dbReference>
<dbReference type="SMR" id="B0BRW3"/>
<dbReference type="KEGG" id="apj:APJL_1670"/>
<dbReference type="HOGENOM" id="CLU_031248_2_2_6"/>
<dbReference type="UniPathway" id="UPA00904">
    <property type="reaction ID" value="UER00871"/>
</dbReference>
<dbReference type="Proteomes" id="UP000008547">
    <property type="component" value="Chromosome"/>
</dbReference>
<dbReference type="GO" id="GO:0005829">
    <property type="term" value="C:cytosol"/>
    <property type="evidence" value="ECO:0007669"/>
    <property type="project" value="TreeGrafter"/>
</dbReference>
<dbReference type="GO" id="GO:0008782">
    <property type="term" value="F:adenosylhomocysteine nucleosidase activity"/>
    <property type="evidence" value="ECO:0007669"/>
    <property type="project" value="UniProtKB-UniRule"/>
</dbReference>
<dbReference type="GO" id="GO:0008930">
    <property type="term" value="F:methylthioadenosine nucleosidase activity"/>
    <property type="evidence" value="ECO:0007669"/>
    <property type="project" value="UniProtKB-UniRule"/>
</dbReference>
<dbReference type="GO" id="GO:0019509">
    <property type="term" value="P:L-methionine salvage from methylthioadenosine"/>
    <property type="evidence" value="ECO:0007669"/>
    <property type="project" value="UniProtKB-UniRule"/>
</dbReference>
<dbReference type="GO" id="GO:0019284">
    <property type="term" value="P:L-methionine salvage from S-adenosylmethionine"/>
    <property type="evidence" value="ECO:0007669"/>
    <property type="project" value="TreeGrafter"/>
</dbReference>
<dbReference type="GO" id="GO:0009164">
    <property type="term" value="P:nucleoside catabolic process"/>
    <property type="evidence" value="ECO:0007669"/>
    <property type="project" value="InterPro"/>
</dbReference>
<dbReference type="CDD" id="cd09008">
    <property type="entry name" value="MTAN"/>
    <property type="match status" value="1"/>
</dbReference>
<dbReference type="FunFam" id="3.40.50.1580:FF:000001">
    <property type="entry name" value="MTA/SAH nucleosidase family protein"/>
    <property type="match status" value="1"/>
</dbReference>
<dbReference type="Gene3D" id="3.40.50.1580">
    <property type="entry name" value="Nucleoside phosphorylase domain"/>
    <property type="match status" value="1"/>
</dbReference>
<dbReference type="HAMAP" id="MF_01684">
    <property type="entry name" value="Salvage_MtnN"/>
    <property type="match status" value="1"/>
</dbReference>
<dbReference type="InterPro" id="IPR010049">
    <property type="entry name" value="MTA_SAH_Nsdase"/>
</dbReference>
<dbReference type="InterPro" id="IPR000845">
    <property type="entry name" value="Nucleoside_phosphorylase_d"/>
</dbReference>
<dbReference type="InterPro" id="IPR035994">
    <property type="entry name" value="Nucleoside_phosphorylase_sf"/>
</dbReference>
<dbReference type="NCBIfam" id="TIGR01704">
    <property type="entry name" value="MTA_SAH-Nsdase"/>
    <property type="match status" value="1"/>
</dbReference>
<dbReference type="NCBIfam" id="NF004079">
    <property type="entry name" value="PRK05584.1"/>
    <property type="match status" value="1"/>
</dbReference>
<dbReference type="PANTHER" id="PTHR46832">
    <property type="entry name" value="5'-METHYLTHIOADENOSINE/S-ADENOSYLHOMOCYSTEINE NUCLEOSIDASE"/>
    <property type="match status" value="1"/>
</dbReference>
<dbReference type="PANTHER" id="PTHR46832:SF1">
    <property type="entry name" value="5'-METHYLTHIOADENOSINE_S-ADENOSYLHOMOCYSTEINE NUCLEOSIDASE"/>
    <property type="match status" value="1"/>
</dbReference>
<dbReference type="Pfam" id="PF01048">
    <property type="entry name" value="PNP_UDP_1"/>
    <property type="match status" value="1"/>
</dbReference>
<dbReference type="SUPFAM" id="SSF53167">
    <property type="entry name" value="Purine and uridine phosphorylases"/>
    <property type="match status" value="1"/>
</dbReference>
<name>MTNN_ACTPJ</name>
<sequence length="232" mass="24507">MRLKIGIIGAMAQEVEILRNLMVEAKVIKMAGCKIYDGKINNTKVALLQSGIGKVSAAIGTTLLLELTKPDMVINTGSAGGLDANLNVGDIVISTEVRHHDADVTAFGYEKGQLPANPAAFLPNEQLVSVALKETQTAGFNAVSGLICSGDVFVNGAEKIAQIRQDFPNVAAVEMEAAAIAQVCHAFNVPFVVVRAISDVADKESHLSFDEFLPLAAKNSSEIVVAMLNNFA</sequence>